<reference key="1">
    <citation type="submission" date="2006-03" db="EMBL/GenBank/DDBJ databases">
        <title>Complete sequence of Rhodopseudomonas palustris BisB5.</title>
        <authorList>
            <consortium name="US DOE Joint Genome Institute"/>
            <person name="Copeland A."/>
            <person name="Lucas S."/>
            <person name="Lapidus A."/>
            <person name="Barry K."/>
            <person name="Detter J.C."/>
            <person name="Glavina del Rio T."/>
            <person name="Hammon N."/>
            <person name="Israni S."/>
            <person name="Dalin E."/>
            <person name="Tice H."/>
            <person name="Pitluck S."/>
            <person name="Chain P."/>
            <person name="Malfatti S."/>
            <person name="Shin M."/>
            <person name="Vergez L."/>
            <person name="Schmutz J."/>
            <person name="Larimer F."/>
            <person name="Land M."/>
            <person name="Hauser L."/>
            <person name="Pelletier D.A."/>
            <person name="Kyrpides N."/>
            <person name="Lykidis A."/>
            <person name="Oda Y."/>
            <person name="Harwood C.S."/>
            <person name="Richardson P."/>
        </authorList>
    </citation>
    <scope>NUCLEOTIDE SEQUENCE [LARGE SCALE GENOMIC DNA]</scope>
    <source>
        <strain>BisB5</strain>
    </source>
</reference>
<evidence type="ECO:0000250" key="1"/>
<evidence type="ECO:0000255" key="2">
    <source>
        <dbReference type="HAMAP-Rule" id="MF_00118"/>
    </source>
</evidence>
<keyword id="KW-0963">Cytoplasm</keyword>
<keyword id="KW-0251">Elongation factor</keyword>
<keyword id="KW-0342">GTP-binding</keyword>
<keyword id="KW-0378">Hydrolase</keyword>
<keyword id="KW-0460">Magnesium</keyword>
<keyword id="KW-0479">Metal-binding</keyword>
<keyword id="KW-0547">Nucleotide-binding</keyword>
<keyword id="KW-0648">Protein biosynthesis</keyword>
<protein>
    <recommendedName>
        <fullName evidence="2">Elongation factor Tu 2</fullName>
        <shortName evidence="2">EF-Tu 2</shortName>
        <ecNumber evidence="2">3.6.5.3</ecNumber>
    </recommendedName>
</protein>
<sequence length="396" mass="43272">MAKAKFERNKPHCNIGTIGHVDHGKTSLTAAITKVLAETGGATFTAYDQIDKAPEEKARGITISTAHVEYETSNRHYAHVDCPGHADYVKNMITGAAQMDGAILVVSAADGPMPQTREHILLARQVGVPALVVFLNKCDMVDDPELLELVEMEVRELLSKYDFPGDDIPIVKGSALAALENSDAKLGHDAILELMKAVDAYIPQPERPIDQPFLMPVEDVFSISGRGTVVTGRVERGIVKVGEEIEIVGIRDTQKTTCTGVEMFRKLLDQGQAGDNIGCLLRGTKREDVERGQVLCKPGSVKPHTKFKAEAYILTKEEGGRHTPFFTNYRPQFYFRTTDVTGVVHLPEGTEMVMPGDNIAMEVHLIVPIAMEEKLRFAIREGGRTVGAGVVASIIE</sequence>
<dbReference type="EC" id="3.6.5.3" evidence="2"/>
<dbReference type="EMBL" id="CP000283">
    <property type="protein sequence ID" value="ABE40429.1"/>
    <property type="molecule type" value="Genomic_DNA"/>
</dbReference>
<dbReference type="SMR" id="Q134R0"/>
<dbReference type="STRING" id="316057.RPD_3204"/>
<dbReference type="KEGG" id="rpd:RPD_3204"/>
<dbReference type="eggNOG" id="COG0050">
    <property type="taxonomic scope" value="Bacteria"/>
</dbReference>
<dbReference type="HOGENOM" id="CLU_007265_0_1_5"/>
<dbReference type="BioCyc" id="RPAL316057:RPD_RS16085-MONOMER"/>
<dbReference type="Proteomes" id="UP000001818">
    <property type="component" value="Chromosome"/>
</dbReference>
<dbReference type="GO" id="GO:0005829">
    <property type="term" value="C:cytosol"/>
    <property type="evidence" value="ECO:0007669"/>
    <property type="project" value="TreeGrafter"/>
</dbReference>
<dbReference type="GO" id="GO:0005525">
    <property type="term" value="F:GTP binding"/>
    <property type="evidence" value="ECO:0007669"/>
    <property type="project" value="UniProtKB-UniRule"/>
</dbReference>
<dbReference type="GO" id="GO:0003924">
    <property type="term" value="F:GTPase activity"/>
    <property type="evidence" value="ECO:0007669"/>
    <property type="project" value="InterPro"/>
</dbReference>
<dbReference type="GO" id="GO:0097216">
    <property type="term" value="F:guanosine tetraphosphate binding"/>
    <property type="evidence" value="ECO:0007669"/>
    <property type="project" value="UniProtKB-ARBA"/>
</dbReference>
<dbReference type="GO" id="GO:0003746">
    <property type="term" value="F:translation elongation factor activity"/>
    <property type="evidence" value="ECO:0007669"/>
    <property type="project" value="UniProtKB-UniRule"/>
</dbReference>
<dbReference type="CDD" id="cd01884">
    <property type="entry name" value="EF_Tu"/>
    <property type="match status" value="1"/>
</dbReference>
<dbReference type="CDD" id="cd03697">
    <property type="entry name" value="EFTU_II"/>
    <property type="match status" value="1"/>
</dbReference>
<dbReference type="CDD" id="cd03707">
    <property type="entry name" value="EFTU_III"/>
    <property type="match status" value="1"/>
</dbReference>
<dbReference type="FunFam" id="2.40.30.10:FF:000001">
    <property type="entry name" value="Elongation factor Tu"/>
    <property type="match status" value="1"/>
</dbReference>
<dbReference type="FunFam" id="3.40.50.300:FF:000003">
    <property type="entry name" value="Elongation factor Tu"/>
    <property type="match status" value="1"/>
</dbReference>
<dbReference type="Gene3D" id="3.40.50.300">
    <property type="entry name" value="P-loop containing nucleotide triphosphate hydrolases"/>
    <property type="match status" value="1"/>
</dbReference>
<dbReference type="Gene3D" id="2.40.30.10">
    <property type="entry name" value="Translation factors"/>
    <property type="match status" value="2"/>
</dbReference>
<dbReference type="HAMAP" id="MF_00118_B">
    <property type="entry name" value="EF_Tu_B"/>
    <property type="match status" value="1"/>
</dbReference>
<dbReference type="InterPro" id="IPR041709">
    <property type="entry name" value="EF-Tu_GTP-bd"/>
</dbReference>
<dbReference type="InterPro" id="IPR050055">
    <property type="entry name" value="EF-Tu_GTPase"/>
</dbReference>
<dbReference type="InterPro" id="IPR004161">
    <property type="entry name" value="EFTu-like_2"/>
</dbReference>
<dbReference type="InterPro" id="IPR033720">
    <property type="entry name" value="EFTU_2"/>
</dbReference>
<dbReference type="InterPro" id="IPR031157">
    <property type="entry name" value="G_TR_CS"/>
</dbReference>
<dbReference type="InterPro" id="IPR027417">
    <property type="entry name" value="P-loop_NTPase"/>
</dbReference>
<dbReference type="InterPro" id="IPR005225">
    <property type="entry name" value="Small_GTP-bd"/>
</dbReference>
<dbReference type="InterPro" id="IPR000795">
    <property type="entry name" value="T_Tr_GTP-bd_dom"/>
</dbReference>
<dbReference type="InterPro" id="IPR009000">
    <property type="entry name" value="Transl_B-barrel_sf"/>
</dbReference>
<dbReference type="InterPro" id="IPR009001">
    <property type="entry name" value="Transl_elong_EF1A/Init_IF2_C"/>
</dbReference>
<dbReference type="InterPro" id="IPR004541">
    <property type="entry name" value="Transl_elong_EFTu/EF1A_bac/org"/>
</dbReference>
<dbReference type="InterPro" id="IPR004160">
    <property type="entry name" value="Transl_elong_EFTu/EF1A_C"/>
</dbReference>
<dbReference type="NCBIfam" id="TIGR00485">
    <property type="entry name" value="EF-Tu"/>
    <property type="match status" value="1"/>
</dbReference>
<dbReference type="NCBIfam" id="NF000766">
    <property type="entry name" value="PRK00049.1"/>
    <property type="match status" value="1"/>
</dbReference>
<dbReference type="NCBIfam" id="NF009372">
    <property type="entry name" value="PRK12735.1"/>
    <property type="match status" value="1"/>
</dbReference>
<dbReference type="NCBIfam" id="NF009373">
    <property type="entry name" value="PRK12736.1"/>
    <property type="match status" value="1"/>
</dbReference>
<dbReference type="NCBIfam" id="TIGR00231">
    <property type="entry name" value="small_GTP"/>
    <property type="match status" value="1"/>
</dbReference>
<dbReference type="PANTHER" id="PTHR43721:SF22">
    <property type="entry name" value="ELONGATION FACTOR TU, MITOCHONDRIAL"/>
    <property type="match status" value="1"/>
</dbReference>
<dbReference type="PANTHER" id="PTHR43721">
    <property type="entry name" value="ELONGATION FACTOR TU-RELATED"/>
    <property type="match status" value="1"/>
</dbReference>
<dbReference type="Pfam" id="PF00009">
    <property type="entry name" value="GTP_EFTU"/>
    <property type="match status" value="1"/>
</dbReference>
<dbReference type="Pfam" id="PF03144">
    <property type="entry name" value="GTP_EFTU_D2"/>
    <property type="match status" value="1"/>
</dbReference>
<dbReference type="Pfam" id="PF03143">
    <property type="entry name" value="GTP_EFTU_D3"/>
    <property type="match status" value="1"/>
</dbReference>
<dbReference type="PRINTS" id="PR00315">
    <property type="entry name" value="ELONGATNFCT"/>
</dbReference>
<dbReference type="SUPFAM" id="SSF50465">
    <property type="entry name" value="EF-Tu/eEF-1alpha/eIF2-gamma C-terminal domain"/>
    <property type="match status" value="1"/>
</dbReference>
<dbReference type="SUPFAM" id="SSF52540">
    <property type="entry name" value="P-loop containing nucleoside triphosphate hydrolases"/>
    <property type="match status" value="1"/>
</dbReference>
<dbReference type="SUPFAM" id="SSF50447">
    <property type="entry name" value="Translation proteins"/>
    <property type="match status" value="1"/>
</dbReference>
<dbReference type="PROSITE" id="PS00301">
    <property type="entry name" value="G_TR_1"/>
    <property type="match status" value="1"/>
</dbReference>
<dbReference type="PROSITE" id="PS51722">
    <property type="entry name" value="G_TR_2"/>
    <property type="match status" value="1"/>
</dbReference>
<organism>
    <name type="scientific">Rhodopseudomonas palustris (strain BisB5)</name>
    <dbReference type="NCBI Taxonomy" id="316057"/>
    <lineage>
        <taxon>Bacteria</taxon>
        <taxon>Pseudomonadati</taxon>
        <taxon>Pseudomonadota</taxon>
        <taxon>Alphaproteobacteria</taxon>
        <taxon>Hyphomicrobiales</taxon>
        <taxon>Nitrobacteraceae</taxon>
        <taxon>Rhodopseudomonas</taxon>
    </lineage>
</organism>
<comment type="function">
    <text evidence="2">GTP hydrolase that promotes the GTP-dependent binding of aminoacyl-tRNA to the A-site of ribosomes during protein biosynthesis.</text>
</comment>
<comment type="catalytic activity">
    <reaction evidence="2">
        <text>GTP + H2O = GDP + phosphate + H(+)</text>
        <dbReference type="Rhea" id="RHEA:19669"/>
        <dbReference type="ChEBI" id="CHEBI:15377"/>
        <dbReference type="ChEBI" id="CHEBI:15378"/>
        <dbReference type="ChEBI" id="CHEBI:37565"/>
        <dbReference type="ChEBI" id="CHEBI:43474"/>
        <dbReference type="ChEBI" id="CHEBI:58189"/>
        <dbReference type="EC" id="3.6.5.3"/>
    </reaction>
    <physiologicalReaction direction="left-to-right" evidence="2">
        <dbReference type="Rhea" id="RHEA:19670"/>
    </physiologicalReaction>
</comment>
<comment type="subunit">
    <text evidence="2">Monomer.</text>
</comment>
<comment type="subcellular location">
    <subcellularLocation>
        <location evidence="2">Cytoplasm</location>
    </subcellularLocation>
</comment>
<comment type="similarity">
    <text evidence="2">Belongs to the TRAFAC class translation factor GTPase superfamily. Classic translation factor GTPase family. EF-Tu/EF-1A subfamily.</text>
</comment>
<accession>Q134R0</accession>
<feature type="chain" id="PRO_0000337497" description="Elongation factor Tu 2">
    <location>
        <begin position="1"/>
        <end position="396"/>
    </location>
</feature>
<feature type="domain" description="tr-type G">
    <location>
        <begin position="10"/>
        <end position="206"/>
    </location>
</feature>
<feature type="region of interest" description="G1" evidence="1">
    <location>
        <begin position="19"/>
        <end position="26"/>
    </location>
</feature>
<feature type="region of interest" description="G2" evidence="1">
    <location>
        <begin position="60"/>
        <end position="64"/>
    </location>
</feature>
<feature type="region of interest" description="G3" evidence="1">
    <location>
        <begin position="81"/>
        <end position="84"/>
    </location>
</feature>
<feature type="region of interest" description="G4" evidence="1">
    <location>
        <begin position="136"/>
        <end position="139"/>
    </location>
</feature>
<feature type="region of interest" description="G5" evidence="1">
    <location>
        <begin position="174"/>
        <end position="176"/>
    </location>
</feature>
<feature type="binding site" evidence="2">
    <location>
        <begin position="19"/>
        <end position="26"/>
    </location>
    <ligand>
        <name>GTP</name>
        <dbReference type="ChEBI" id="CHEBI:37565"/>
    </ligand>
</feature>
<feature type="binding site" evidence="2">
    <location>
        <position position="26"/>
    </location>
    <ligand>
        <name>Mg(2+)</name>
        <dbReference type="ChEBI" id="CHEBI:18420"/>
    </ligand>
</feature>
<feature type="binding site" evidence="2">
    <location>
        <begin position="81"/>
        <end position="85"/>
    </location>
    <ligand>
        <name>GTP</name>
        <dbReference type="ChEBI" id="CHEBI:37565"/>
    </ligand>
</feature>
<feature type="binding site" evidence="2">
    <location>
        <begin position="136"/>
        <end position="139"/>
    </location>
    <ligand>
        <name>GTP</name>
        <dbReference type="ChEBI" id="CHEBI:37565"/>
    </ligand>
</feature>
<gene>
    <name evidence="2" type="primary">tuf2</name>
    <name type="ordered locus">RPD_3204</name>
</gene>
<name>EFTU2_RHOPS</name>
<proteinExistence type="inferred from homology"/>